<accession>A8FJT9</accession>
<organism>
    <name type="scientific">Campylobacter jejuni subsp. jejuni serotype O:6 (strain 81116 / NCTC 11828)</name>
    <dbReference type="NCBI Taxonomy" id="407148"/>
    <lineage>
        <taxon>Bacteria</taxon>
        <taxon>Pseudomonadati</taxon>
        <taxon>Campylobacterota</taxon>
        <taxon>Epsilonproteobacteria</taxon>
        <taxon>Campylobacterales</taxon>
        <taxon>Campylobacteraceae</taxon>
        <taxon>Campylobacter</taxon>
    </lineage>
</organism>
<evidence type="ECO:0000255" key="1">
    <source>
        <dbReference type="HAMAP-Rule" id="MF_00384"/>
    </source>
</evidence>
<name>KHSE_CAMJ8</name>
<comment type="function">
    <text evidence="1">Catalyzes the ATP-dependent phosphorylation of L-homoserine to L-homoserine phosphate.</text>
</comment>
<comment type="catalytic activity">
    <reaction evidence="1">
        <text>L-homoserine + ATP = O-phospho-L-homoserine + ADP + H(+)</text>
        <dbReference type="Rhea" id="RHEA:13985"/>
        <dbReference type="ChEBI" id="CHEBI:15378"/>
        <dbReference type="ChEBI" id="CHEBI:30616"/>
        <dbReference type="ChEBI" id="CHEBI:57476"/>
        <dbReference type="ChEBI" id="CHEBI:57590"/>
        <dbReference type="ChEBI" id="CHEBI:456216"/>
        <dbReference type="EC" id="2.7.1.39"/>
    </reaction>
</comment>
<comment type="pathway">
    <text evidence="1">Amino-acid biosynthesis; L-threonine biosynthesis; L-threonine from L-aspartate: step 4/5.</text>
</comment>
<comment type="subcellular location">
    <subcellularLocation>
        <location evidence="1">Cytoplasm</location>
    </subcellularLocation>
</comment>
<comment type="similarity">
    <text evidence="1">Belongs to the GHMP kinase family. Homoserine kinase subfamily.</text>
</comment>
<feature type="chain" id="PRO_1000072188" description="Homoserine kinase">
    <location>
        <begin position="1"/>
        <end position="292"/>
    </location>
</feature>
<feature type="binding site" evidence="1">
    <location>
        <begin position="84"/>
        <end position="94"/>
    </location>
    <ligand>
        <name>ATP</name>
        <dbReference type="ChEBI" id="CHEBI:30616"/>
    </ligand>
</feature>
<sequence>MKILVPATSANLGPGFDCLGLSLKLFNETQIQKSGVFSISIGGEGSDNIFLKKNNIFVNIFYEIYEKLSGKKDNFRFIFQNNIPLSRGLGSSSAVIVGAIASAYYMSGFKVEKERILDEALIYENHPDNIAPATLGGFVCSLVEKNKVYSIKKEIDKDLAAVVVIPNLAMSTEQSRQALAKNLSFNDAVFNLSHASFLTACFLEKKYEFLKFASQDKLHEINRMKNLPELFEVQKFALENKALMSTLSGSGSSFFSLAFKDDALALAKKMQTKFKDFCVQYLEFDDNGFEIC</sequence>
<keyword id="KW-0028">Amino-acid biosynthesis</keyword>
<keyword id="KW-0067">ATP-binding</keyword>
<keyword id="KW-0963">Cytoplasm</keyword>
<keyword id="KW-0418">Kinase</keyword>
<keyword id="KW-0547">Nucleotide-binding</keyword>
<keyword id="KW-0791">Threonine biosynthesis</keyword>
<keyword id="KW-0808">Transferase</keyword>
<protein>
    <recommendedName>
        <fullName evidence="1">Homoserine kinase</fullName>
        <shortName evidence="1">HK</shortName>
        <shortName evidence="1">HSK</shortName>
        <ecNumber evidence="1">2.7.1.39</ecNumber>
    </recommendedName>
</protein>
<proteinExistence type="inferred from homology"/>
<reference key="1">
    <citation type="journal article" date="2007" name="J. Bacteriol.">
        <title>The complete genome sequence of Campylobacter jejuni strain 81116 (NCTC11828).</title>
        <authorList>
            <person name="Pearson B.M."/>
            <person name="Gaskin D.J.H."/>
            <person name="Segers R.P.A.M."/>
            <person name="Wells J.M."/>
            <person name="Nuijten P.J.M."/>
            <person name="van Vliet A.H.M."/>
        </authorList>
    </citation>
    <scope>NUCLEOTIDE SEQUENCE [LARGE SCALE GENOMIC DNA]</scope>
    <source>
        <strain>81116 / NCTC 11828</strain>
    </source>
</reference>
<dbReference type="EC" id="2.7.1.39" evidence="1"/>
<dbReference type="EMBL" id="CP000814">
    <property type="protein sequence ID" value="ABV51726.1"/>
    <property type="molecule type" value="Genomic_DNA"/>
</dbReference>
<dbReference type="RefSeq" id="WP_002866744.1">
    <property type="nucleotide sequence ID" value="NC_009839.1"/>
</dbReference>
<dbReference type="SMR" id="A8FJT9"/>
<dbReference type="KEGG" id="cju:C8J_0127"/>
<dbReference type="HOGENOM" id="CLU_041243_0_0_7"/>
<dbReference type="UniPathway" id="UPA00050">
    <property type="reaction ID" value="UER00064"/>
</dbReference>
<dbReference type="GO" id="GO:0005737">
    <property type="term" value="C:cytoplasm"/>
    <property type="evidence" value="ECO:0007669"/>
    <property type="project" value="UniProtKB-SubCell"/>
</dbReference>
<dbReference type="GO" id="GO:0005524">
    <property type="term" value="F:ATP binding"/>
    <property type="evidence" value="ECO:0007669"/>
    <property type="project" value="UniProtKB-UniRule"/>
</dbReference>
<dbReference type="GO" id="GO:0004413">
    <property type="term" value="F:homoserine kinase activity"/>
    <property type="evidence" value="ECO:0007669"/>
    <property type="project" value="UniProtKB-UniRule"/>
</dbReference>
<dbReference type="GO" id="GO:0009088">
    <property type="term" value="P:threonine biosynthetic process"/>
    <property type="evidence" value="ECO:0007669"/>
    <property type="project" value="UniProtKB-UniRule"/>
</dbReference>
<dbReference type="Gene3D" id="3.30.230.10">
    <property type="match status" value="1"/>
</dbReference>
<dbReference type="Gene3D" id="3.30.70.890">
    <property type="entry name" value="GHMP kinase, C-terminal domain"/>
    <property type="match status" value="1"/>
</dbReference>
<dbReference type="HAMAP" id="MF_00384">
    <property type="entry name" value="Homoser_kinase"/>
    <property type="match status" value="1"/>
</dbReference>
<dbReference type="InterPro" id="IPR013750">
    <property type="entry name" value="GHMP_kinase_C_dom"/>
</dbReference>
<dbReference type="InterPro" id="IPR036554">
    <property type="entry name" value="GHMP_kinase_C_sf"/>
</dbReference>
<dbReference type="InterPro" id="IPR006204">
    <property type="entry name" value="GHMP_kinase_N_dom"/>
</dbReference>
<dbReference type="InterPro" id="IPR006203">
    <property type="entry name" value="GHMP_knse_ATP-bd_CS"/>
</dbReference>
<dbReference type="InterPro" id="IPR000870">
    <property type="entry name" value="Homoserine_kinase"/>
</dbReference>
<dbReference type="InterPro" id="IPR020568">
    <property type="entry name" value="Ribosomal_Su5_D2-typ_SF"/>
</dbReference>
<dbReference type="InterPro" id="IPR014721">
    <property type="entry name" value="Ribsml_uS5_D2-typ_fold_subgr"/>
</dbReference>
<dbReference type="NCBIfam" id="TIGR00191">
    <property type="entry name" value="thrB"/>
    <property type="match status" value="1"/>
</dbReference>
<dbReference type="PANTHER" id="PTHR20861:SF1">
    <property type="entry name" value="HOMOSERINE KINASE"/>
    <property type="match status" value="1"/>
</dbReference>
<dbReference type="PANTHER" id="PTHR20861">
    <property type="entry name" value="HOMOSERINE/4-DIPHOSPHOCYTIDYL-2-C-METHYL-D-ERYTHRITOL KINASE"/>
    <property type="match status" value="1"/>
</dbReference>
<dbReference type="Pfam" id="PF08544">
    <property type="entry name" value="GHMP_kinases_C"/>
    <property type="match status" value="1"/>
</dbReference>
<dbReference type="Pfam" id="PF00288">
    <property type="entry name" value="GHMP_kinases_N"/>
    <property type="match status" value="1"/>
</dbReference>
<dbReference type="PIRSF" id="PIRSF000676">
    <property type="entry name" value="Homoser_kin"/>
    <property type="match status" value="1"/>
</dbReference>
<dbReference type="PRINTS" id="PR00958">
    <property type="entry name" value="HOMSERKINASE"/>
</dbReference>
<dbReference type="SUPFAM" id="SSF55060">
    <property type="entry name" value="GHMP Kinase, C-terminal domain"/>
    <property type="match status" value="1"/>
</dbReference>
<dbReference type="SUPFAM" id="SSF54211">
    <property type="entry name" value="Ribosomal protein S5 domain 2-like"/>
    <property type="match status" value="1"/>
</dbReference>
<dbReference type="PROSITE" id="PS00627">
    <property type="entry name" value="GHMP_KINASES_ATP"/>
    <property type="match status" value="1"/>
</dbReference>
<gene>
    <name evidence="1" type="primary">thrB</name>
    <name type="ordered locus">C8J_0127</name>
</gene>